<keyword id="KW-0030">Aminoacyl-tRNA synthetase</keyword>
<keyword id="KW-0067">ATP-binding</keyword>
<keyword id="KW-0963">Cytoplasm</keyword>
<keyword id="KW-0436">Ligase</keyword>
<keyword id="KW-0479">Metal-binding</keyword>
<keyword id="KW-0547">Nucleotide-binding</keyword>
<keyword id="KW-0648">Protein biosynthesis</keyword>
<keyword id="KW-0694">RNA-binding</keyword>
<keyword id="KW-0820">tRNA-binding</keyword>
<keyword id="KW-0862">Zinc</keyword>
<accession>A7FLR7</accession>
<name>SYA_YERP3</name>
<organism>
    <name type="scientific">Yersinia pseudotuberculosis serotype O:1b (strain IP 31758)</name>
    <dbReference type="NCBI Taxonomy" id="349747"/>
    <lineage>
        <taxon>Bacteria</taxon>
        <taxon>Pseudomonadati</taxon>
        <taxon>Pseudomonadota</taxon>
        <taxon>Gammaproteobacteria</taxon>
        <taxon>Enterobacterales</taxon>
        <taxon>Yersiniaceae</taxon>
        <taxon>Yersinia</taxon>
    </lineage>
</organism>
<gene>
    <name evidence="1" type="primary">alaS</name>
    <name type="ordered locus">YpsIP31758_3238</name>
</gene>
<dbReference type="EC" id="6.1.1.7" evidence="1"/>
<dbReference type="EMBL" id="CP000720">
    <property type="protein sequence ID" value="ABS49532.1"/>
    <property type="molecule type" value="Genomic_DNA"/>
</dbReference>
<dbReference type="RefSeq" id="WP_012105619.1">
    <property type="nucleotide sequence ID" value="NC_009708.1"/>
</dbReference>
<dbReference type="SMR" id="A7FLR7"/>
<dbReference type="KEGG" id="ypi:YpsIP31758_3238"/>
<dbReference type="HOGENOM" id="CLU_004485_1_1_6"/>
<dbReference type="Proteomes" id="UP000002412">
    <property type="component" value="Chromosome"/>
</dbReference>
<dbReference type="GO" id="GO:0005829">
    <property type="term" value="C:cytosol"/>
    <property type="evidence" value="ECO:0007669"/>
    <property type="project" value="TreeGrafter"/>
</dbReference>
<dbReference type="GO" id="GO:0004813">
    <property type="term" value="F:alanine-tRNA ligase activity"/>
    <property type="evidence" value="ECO:0007669"/>
    <property type="project" value="UniProtKB-UniRule"/>
</dbReference>
<dbReference type="GO" id="GO:0002161">
    <property type="term" value="F:aminoacyl-tRNA deacylase activity"/>
    <property type="evidence" value="ECO:0007669"/>
    <property type="project" value="TreeGrafter"/>
</dbReference>
<dbReference type="GO" id="GO:0005524">
    <property type="term" value="F:ATP binding"/>
    <property type="evidence" value="ECO:0007669"/>
    <property type="project" value="UniProtKB-UniRule"/>
</dbReference>
<dbReference type="GO" id="GO:0000049">
    <property type="term" value="F:tRNA binding"/>
    <property type="evidence" value="ECO:0007669"/>
    <property type="project" value="UniProtKB-KW"/>
</dbReference>
<dbReference type="GO" id="GO:0008270">
    <property type="term" value="F:zinc ion binding"/>
    <property type="evidence" value="ECO:0007669"/>
    <property type="project" value="UniProtKB-UniRule"/>
</dbReference>
<dbReference type="GO" id="GO:0006419">
    <property type="term" value="P:alanyl-tRNA aminoacylation"/>
    <property type="evidence" value="ECO:0007669"/>
    <property type="project" value="UniProtKB-UniRule"/>
</dbReference>
<dbReference type="GO" id="GO:0045892">
    <property type="term" value="P:negative regulation of DNA-templated transcription"/>
    <property type="evidence" value="ECO:0007669"/>
    <property type="project" value="TreeGrafter"/>
</dbReference>
<dbReference type="CDD" id="cd00673">
    <property type="entry name" value="AlaRS_core"/>
    <property type="match status" value="1"/>
</dbReference>
<dbReference type="FunFam" id="2.40.30.130:FF:000001">
    <property type="entry name" value="Alanine--tRNA ligase"/>
    <property type="match status" value="1"/>
</dbReference>
<dbReference type="FunFam" id="3.10.310.40:FF:000001">
    <property type="entry name" value="Alanine--tRNA ligase"/>
    <property type="match status" value="1"/>
</dbReference>
<dbReference type="FunFam" id="3.30.54.20:FF:000001">
    <property type="entry name" value="Alanine--tRNA ligase"/>
    <property type="match status" value="1"/>
</dbReference>
<dbReference type="FunFam" id="3.30.930.10:FF:000004">
    <property type="entry name" value="Alanine--tRNA ligase"/>
    <property type="match status" value="1"/>
</dbReference>
<dbReference type="FunFam" id="3.30.980.10:FF:000004">
    <property type="entry name" value="Alanine--tRNA ligase, cytoplasmic"/>
    <property type="match status" value="1"/>
</dbReference>
<dbReference type="Gene3D" id="2.40.30.130">
    <property type="match status" value="1"/>
</dbReference>
<dbReference type="Gene3D" id="3.10.310.40">
    <property type="match status" value="1"/>
</dbReference>
<dbReference type="Gene3D" id="3.30.54.20">
    <property type="match status" value="1"/>
</dbReference>
<dbReference type="Gene3D" id="6.10.250.550">
    <property type="match status" value="1"/>
</dbReference>
<dbReference type="Gene3D" id="3.30.930.10">
    <property type="entry name" value="Bira Bifunctional Protein, Domain 2"/>
    <property type="match status" value="1"/>
</dbReference>
<dbReference type="Gene3D" id="3.30.980.10">
    <property type="entry name" value="Threonyl-trna Synthetase, Chain A, domain 2"/>
    <property type="match status" value="1"/>
</dbReference>
<dbReference type="HAMAP" id="MF_00036_B">
    <property type="entry name" value="Ala_tRNA_synth_B"/>
    <property type="match status" value="1"/>
</dbReference>
<dbReference type="InterPro" id="IPR045864">
    <property type="entry name" value="aa-tRNA-synth_II/BPL/LPL"/>
</dbReference>
<dbReference type="InterPro" id="IPR002318">
    <property type="entry name" value="Ala-tRNA-lgiase_IIc"/>
</dbReference>
<dbReference type="InterPro" id="IPR018162">
    <property type="entry name" value="Ala-tRNA-ligase_IIc_anticod-bd"/>
</dbReference>
<dbReference type="InterPro" id="IPR018165">
    <property type="entry name" value="Ala-tRNA-synth_IIc_core"/>
</dbReference>
<dbReference type="InterPro" id="IPR018164">
    <property type="entry name" value="Ala-tRNA-synth_IIc_N"/>
</dbReference>
<dbReference type="InterPro" id="IPR050058">
    <property type="entry name" value="Ala-tRNA_ligase"/>
</dbReference>
<dbReference type="InterPro" id="IPR023033">
    <property type="entry name" value="Ala_tRNA_ligase_euk/bac"/>
</dbReference>
<dbReference type="InterPro" id="IPR003156">
    <property type="entry name" value="DHHA1_dom"/>
</dbReference>
<dbReference type="InterPro" id="IPR018163">
    <property type="entry name" value="Thr/Ala-tRNA-synth_IIc_edit"/>
</dbReference>
<dbReference type="InterPro" id="IPR009000">
    <property type="entry name" value="Transl_B-barrel_sf"/>
</dbReference>
<dbReference type="InterPro" id="IPR012947">
    <property type="entry name" value="tRNA_SAD"/>
</dbReference>
<dbReference type="NCBIfam" id="TIGR00344">
    <property type="entry name" value="alaS"/>
    <property type="match status" value="1"/>
</dbReference>
<dbReference type="PANTHER" id="PTHR11777:SF9">
    <property type="entry name" value="ALANINE--TRNA LIGASE, CYTOPLASMIC"/>
    <property type="match status" value="1"/>
</dbReference>
<dbReference type="PANTHER" id="PTHR11777">
    <property type="entry name" value="ALANYL-TRNA SYNTHETASE"/>
    <property type="match status" value="1"/>
</dbReference>
<dbReference type="Pfam" id="PF02272">
    <property type="entry name" value="DHHA1"/>
    <property type="match status" value="1"/>
</dbReference>
<dbReference type="Pfam" id="PF01411">
    <property type="entry name" value="tRNA-synt_2c"/>
    <property type="match status" value="1"/>
</dbReference>
<dbReference type="Pfam" id="PF07973">
    <property type="entry name" value="tRNA_SAD"/>
    <property type="match status" value="1"/>
</dbReference>
<dbReference type="PRINTS" id="PR00980">
    <property type="entry name" value="TRNASYNTHALA"/>
</dbReference>
<dbReference type="SMART" id="SM00863">
    <property type="entry name" value="tRNA_SAD"/>
    <property type="match status" value="1"/>
</dbReference>
<dbReference type="SUPFAM" id="SSF55681">
    <property type="entry name" value="Class II aaRS and biotin synthetases"/>
    <property type="match status" value="1"/>
</dbReference>
<dbReference type="SUPFAM" id="SSF101353">
    <property type="entry name" value="Putative anticodon-binding domain of alanyl-tRNA synthetase (AlaRS)"/>
    <property type="match status" value="1"/>
</dbReference>
<dbReference type="SUPFAM" id="SSF55186">
    <property type="entry name" value="ThrRS/AlaRS common domain"/>
    <property type="match status" value="1"/>
</dbReference>
<dbReference type="SUPFAM" id="SSF50447">
    <property type="entry name" value="Translation proteins"/>
    <property type="match status" value="1"/>
</dbReference>
<dbReference type="PROSITE" id="PS50860">
    <property type="entry name" value="AA_TRNA_LIGASE_II_ALA"/>
    <property type="match status" value="1"/>
</dbReference>
<protein>
    <recommendedName>
        <fullName evidence="1">Alanine--tRNA ligase</fullName>
        <ecNumber evidence="1">6.1.1.7</ecNumber>
    </recommendedName>
    <alternativeName>
        <fullName evidence="1">Alanyl-tRNA synthetase</fullName>
        <shortName evidence="1">AlaRS</shortName>
    </alternativeName>
</protein>
<feature type="chain" id="PRO_0000347875" description="Alanine--tRNA ligase">
    <location>
        <begin position="1"/>
        <end position="875"/>
    </location>
</feature>
<feature type="binding site" evidence="1">
    <location>
        <position position="564"/>
    </location>
    <ligand>
        <name>Zn(2+)</name>
        <dbReference type="ChEBI" id="CHEBI:29105"/>
    </ligand>
</feature>
<feature type="binding site" evidence="1">
    <location>
        <position position="568"/>
    </location>
    <ligand>
        <name>Zn(2+)</name>
        <dbReference type="ChEBI" id="CHEBI:29105"/>
    </ligand>
</feature>
<feature type="binding site" evidence="1">
    <location>
        <position position="666"/>
    </location>
    <ligand>
        <name>Zn(2+)</name>
        <dbReference type="ChEBI" id="CHEBI:29105"/>
    </ligand>
</feature>
<feature type="binding site" evidence="1">
    <location>
        <position position="670"/>
    </location>
    <ligand>
        <name>Zn(2+)</name>
        <dbReference type="ChEBI" id="CHEBI:29105"/>
    </ligand>
</feature>
<sequence length="875" mass="96347">MSKSTAEIRQAFLDFFHSKGHQVVSSSSLVPNNDPTLLFTNAGMNQFKDVFLGLDKRAYSRATTSQRCVRAGGKHNDLENVGYTARHHTFFEMLGNFSFGDYFKHDAINFAWELLTSEQWFNLPKEKLWVTVYETDDEAYNIWANEVGVPHERIIRIGDNKGGAFASDNFWQMGDTGPCGPCSEIFFDHGDHIWGGPPGSAEEDGDRYIEIWNIVFMQFNRQSDGTMLPLPKPSVDTGMGLERIAAVLQHVNSNYEIDLFRDLIAAVADVTGATDLSSKSLRVIADHIRSCAFLISDGVIPSNENRGYVLRRIIRRAIRHGNMLGAKETFFYKLVAPLIAVMGPAAAELKQQQAMVEQVLKTEEEQFARTLERGLALLDDELSKLTGDTLDGETAFRLYDTYGFPVDLTADVCRERNLKVDEAGFEQAMEAQRRRARESSGFGADYNSLIRVDSASQFSGYDHVQQHATVTALFRNGEAVDEIHAGEEAVVVLNRTPFYGESGGQVGDKGELKNATATFSVTDTQKYGQAIGHVGILTTGTLRVNHSVEALVDVVRRNRIRLNHSATHLLHAALRNVLGEHVAQKGSLVNDKYLRFDFSHFEAMKPEQIRLVEDLVNEQIRRNMPVQTEVMELDAAKEKGAMALFGEKYDDQVRVLTMGDFSTELCGGTHASRTGDIGLFRILTESGTAAGIRRIEAVTGEGAIALLHQQSDLLQDVAHLVKGDIHNLADKVRAVLDRSKMLERELQQLKDQQAAQESASLSSSAKLINGVKLLVSQLDNVEPKMLRTMVDDLKNQLGSAIIVLATTTDDKVSLIVGVTKDLTGKVKAGELIADIAQQVGGKGGGRPDMAQAGGTDVQALPAALASVEAWVASRM</sequence>
<evidence type="ECO:0000255" key="1">
    <source>
        <dbReference type="HAMAP-Rule" id="MF_00036"/>
    </source>
</evidence>
<comment type="function">
    <text evidence="1">Catalyzes the attachment of alanine to tRNA(Ala) in a two-step reaction: alanine is first activated by ATP to form Ala-AMP and then transferred to the acceptor end of tRNA(Ala). Also edits incorrectly charged Ser-tRNA(Ala) and Gly-tRNA(Ala) via its editing domain.</text>
</comment>
<comment type="catalytic activity">
    <reaction evidence="1">
        <text>tRNA(Ala) + L-alanine + ATP = L-alanyl-tRNA(Ala) + AMP + diphosphate</text>
        <dbReference type="Rhea" id="RHEA:12540"/>
        <dbReference type="Rhea" id="RHEA-COMP:9657"/>
        <dbReference type="Rhea" id="RHEA-COMP:9923"/>
        <dbReference type="ChEBI" id="CHEBI:30616"/>
        <dbReference type="ChEBI" id="CHEBI:33019"/>
        <dbReference type="ChEBI" id="CHEBI:57972"/>
        <dbReference type="ChEBI" id="CHEBI:78442"/>
        <dbReference type="ChEBI" id="CHEBI:78497"/>
        <dbReference type="ChEBI" id="CHEBI:456215"/>
        <dbReference type="EC" id="6.1.1.7"/>
    </reaction>
</comment>
<comment type="cofactor">
    <cofactor evidence="1">
        <name>Zn(2+)</name>
        <dbReference type="ChEBI" id="CHEBI:29105"/>
    </cofactor>
    <text evidence="1">Binds 1 zinc ion per subunit.</text>
</comment>
<comment type="subunit">
    <text evidence="1">Homotetramer.</text>
</comment>
<comment type="subcellular location">
    <subcellularLocation>
        <location evidence="1">Cytoplasm</location>
    </subcellularLocation>
</comment>
<comment type="domain">
    <text evidence="1">Consists of three domains; the N-terminal catalytic domain, the editing domain and the C-terminal C-Ala domain. The editing domain removes incorrectly charged amino acids, while the C-Ala domain, along with tRNA(Ala), serves as a bridge to cooperatively bring together the editing and aminoacylation centers thus stimulating deacylation of misacylated tRNAs.</text>
</comment>
<comment type="similarity">
    <text evidence="1">Belongs to the class-II aminoacyl-tRNA synthetase family.</text>
</comment>
<proteinExistence type="inferred from homology"/>
<reference key="1">
    <citation type="journal article" date="2007" name="PLoS Genet.">
        <title>The complete genome sequence of Yersinia pseudotuberculosis IP31758, the causative agent of Far East scarlet-like fever.</title>
        <authorList>
            <person name="Eppinger M."/>
            <person name="Rosovitz M.J."/>
            <person name="Fricke W.F."/>
            <person name="Rasko D.A."/>
            <person name="Kokorina G."/>
            <person name="Fayolle C."/>
            <person name="Lindler L.E."/>
            <person name="Carniel E."/>
            <person name="Ravel J."/>
        </authorList>
    </citation>
    <scope>NUCLEOTIDE SEQUENCE [LARGE SCALE GENOMIC DNA]</scope>
    <source>
        <strain>IP 31758</strain>
    </source>
</reference>